<dbReference type="EC" id="7.1.2.2" evidence="1"/>
<dbReference type="EMBL" id="AL591973">
    <property type="protein sequence ID" value="CAC98307.1"/>
    <property type="molecule type" value="Genomic_DNA"/>
</dbReference>
<dbReference type="PIR" id="AE1086">
    <property type="entry name" value="AE1086"/>
</dbReference>
<dbReference type="RefSeq" id="NP_463625.1">
    <property type="nucleotide sequence ID" value="NC_003210.1"/>
</dbReference>
<dbReference type="SMR" id="Q8YAM6"/>
<dbReference type="STRING" id="169963.gene:17592728"/>
<dbReference type="PaxDb" id="169963-lmo0092"/>
<dbReference type="EnsemblBacteria" id="CAC98307">
    <property type="protein sequence ID" value="CAC98307"/>
    <property type="gene ID" value="CAC98307"/>
</dbReference>
<dbReference type="GeneID" id="986598"/>
<dbReference type="KEGG" id="lmo:lmo0092"/>
<dbReference type="PATRIC" id="fig|169963.11.peg.95"/>
<dbReference type="eggNOG" id="COG0055">
    <property type="taxonomic scope" value="Bacteria"/>
</dbReference>
<dbReference type="HOGENOM" id="CLU_022398_0_2_9"/>
<dbReference type="OrthoDB" id="9802718at2"/>
<dbReference type="PhylomeDB" id="Q8YAM6"/>
<dbReference type="BioCyc" id="LMON169963:LMO0092-MONOMER"/>
<dbReference type="Proteomes" id="UP000000817">
    <property type="component" value="Chromosome"/>
</dbReference>
<dbReference type="GO" id="GO:0005886">
    <property type="term" value="C:plasma membrane"/>
    <property type="evidence" value="ECO:0007669"/>
    <property type="project" value="UniProtKB-SubCell"/>
</dbReference>
<dbReference type="GO" id="GO:0045259">
    <property type="term" value="C:proton-transporting ATP synthase complex"/>
    <property type="evidence" value="ECO:0007669"/>
    <property type="project" value="UniProtKB-KW"/>
</dbReference>
<dbReference type="GO" id="GO:0005524">
    <property type="term" value="F:ATP binding"/>
    <property type="evidence" value="ECO:0007669"/>
    <property type="project" value="UniProtKB-UniRule"/>
</dbReference>
<dbReference type="GO" id="GO:0016887">
    <property type="term" value="F:ATP hydrolysis activity"/>
    <property type="evidence" value="ECO:0007669"/>
    <property type="project" value="InterPro"/>
</dbReference>
<dbReference type="GO" id="GO:0046933">
    <property type="term" value="F:proton-transporting ATP synthase activity, rotational mechanism"/>
    <property type="evidence" value="ECO:0007669"/>
    <property type="project" value="UniProtKB-UniRule"/>
</dbReference>
<dbReference type="CDD" id="cd18110">
    <property type="entry name" value="ATP-synt_F1_beta_C"/>
    <property type="match status" value="1"/>
</dbReference>
<dbReference type="CDD" id="cd18115">
    <property type="entry name" value="ATP-synt_F1_beta_N"/>
    <property type="match status" value="1"/>
</dbReference>
<dbReference type="CDD" id="cd01133">
    <property type="entry name" value="F1-ATPase_beta_CD"/>
    <property type="match status" value="1"/>
</dbReference>
<dbReference type="FunFam" id="1.10.1140.10:FF:000006">
    <property type="entry name" value="ATP synthase subunit beta"/>
    <property type="match status" value="1"/>
</dbReference>
<dbReference type="FunFam" id="3.40.50.300:FF:001630">
    <property type="entry name" value="ATP synthase subunit beta"/>
    <property type="match status" value="1"/>
</dbReference>
<dbReference type="Gene3D" id="2.40.10.170">
    <property type="match status" value="1"/>
</dbReference>
<dbReference type="Gene3D" id="1.10.1140.10">
    <property type="entry name" value="Bovine Mitochondrial F1-atpase, Atp Synthase Beta Chain, Chain D, domain 3"/>
    <property type="match status" value="1"/>
</dbReference>
<dbReference type="Gene3D" id="3.40.50.300">
    <property type="entry name" value="P-loop containing nucleotide triphosphate hydrolases"/>
    <property type="match status" value="1"/>
</dbReference>
<dbReference type="HAMAP" id="MF_01347">
    <property type="entry name" value="ATP_synth_beta_bact"/>
    <property type="match status" value="1"/>
</dbReference>
<dbReference type="InterPro" id="IPR003593">
    <property type="entry name" value="AAA+_ATPase"/>
</dbReference>
<dbReference type="InterPro" id="IPR055190">
    <property type="entry name" value="ATP-synt_VA_C"/>
</dbReference>
<dbReference type="InterPro" id="IPR005722">
    <property type="entry name" value="ATP_synth_F1_bsu"/>
</dbReference>
<dbReference type="InterPro" id="IPR020003">
    <property type="entry name" value="ATPase_a/bsu_AS"/>
</dbReference>
<dbReference type="InterPro" id="IPR050053">
    <property type="entry name" value="ATPase_alpha/beta_chains"/>
</dbReference>
<dbReference type="InterPro" id="IPR004100">
    <property type="entry name" value="ATPase_F1/V1/A1_a/bsu_N"/>
</dbReference>
<dbReference type="InterPro" id="IPR036121">
    <property type="entry name" value="ATPase_F1/V1/A1_a/bsu_N_sf"/>
</dbReference>
<dbReference type="InterPro" id="IPR000194">
    <property type="entry name" value="ATPase_F1/V1/A1_a/bsu_nucl-bd"/>
</dbReference>
<dbReference type="InterPro" id="IPR024034">
    <property type="entry name" value="ATPase_F1/V1_b/a_C"/>
</dbReference>
<dbReference type="InterPro" id="IPR027417">
    <property type="entry name" value="P-loop_NTPase"/>
</dbReference>
<dbReference type="NCBIfam" id="TIGR01039">
    <property type="entry name" value="atpD"/>
    <property type="match status" value="1"/>
</dbReference>
<dbReference type="PANTHER" id="PTHR15184">
    <property type="entry name" value="ATP SYNTHASE"/>
    <property type="match status" value="1"/>
</dbReference>
<dbReference type="PANTHER" id="PTHR15184:SF71">
    <property type="entry name" value="ATP SYNTHASE SUBUNIT BETA, MITOCHONDRIAL"/>
    <property type="match status" value="1"/>
</dbReference>
<dbReference type="Pfam" id="PF00006">
    <property type="entry name" value="ATP-synt_ab"/>
    <property type="match status" value="1"/>
</dbReference>
<dbReference type="Pfam" id="PF02874">
    <property type="entry name" value="ATP-synt_ab_N"/>
    <property type="match status" value="1"/>
</dbReference>
<dbReference type="Pfam" id="PF22919">
    <property type="entry name" value="ATP-synt_VA_C"/>
    <property type="match status" value="1"/>
</dbReference>
<dbReference type="SMART" id="SM00382">
    <property type="entry name" value="AAA"/>
    <property type="match status" value="1"/>
</dbReference>
<dbReference type="SUPFAM" id="SSF47917">
    <property type="entry name" value="C-terminal domain of alpha and beta subunits of F1 ATP synthase"/>
    <property type="match status" value="1"/>
</dbReference>
<dbReference type="SUPFAM" id="SSF50615">
    <property type="entry name" value="N-terminal domain of alpha and beta subunits of F1 ATP synthase"/>
    <property type="match status" value="1"/>
</dbReference>
<dbReference type="SUPFAM" id="SSF52540">
    <property type="entry name" value="P-loop containing nucleoside triphosphate hydrolases"/>
    <property type="match status" value="1"/>
</dbReference>
<dbReference type="PROSITE" id="PS00152">
    <property type="entry name" value="ATPASE_ALPHA_BETA"/>
    <property type="match status" value="1"/>
</dbReference>
<reference key="1">
    <citation type="journal article" date="2001" name="Science">
        <title>Comparative genomics of Listeria species.</title>
        <authorList>
            <person name="Glaser P."/>
            <person name="Frangeul L."/>
            <person name="Buchrieser C."/>
            <person name="Rusniok C."/>
            <person name="Amend A."/>
            <person name="Baquero F."/>
            <person name="Berche P."/>
            <person name="Bloecker H."/>
            <person name="Brandt P."/>
            <person name="Chakraborty T."/>
            <person name="Charbit A."/>
            <person name="Chetouani F."/>
            <person name="Couve E."/>
            <person name="de Daruvar A."/>
            <person name="Dehoux P."/>
            <person name="Domann E."/>
            <person name="Dominguez-Bernal G."/>
            <person name="Duchaud E."/>
            <person name="Durant L."/>
            <person name="Dussurget O."/>
            <person name="Entian K.-D."/>
            <person name="Fsihi H."/>
            <person name="Garcia-del Portillo F."/>
            <person name="Garrido P."/>
            <person name="Gautier L."/>
            <person name="Goebel W."/>
            <person name="Gomez-Lopez N."/>
            <person name="Hain T."/>
            <person name="Hauf J."/>
            <person name="Jackson D."/>
            <person name="Jones L.-M."/>
            <person name="Kaerst U."/>
            <person name="Kreft J."/>
            <person name="Kuhn M."/>
            <person name="Kunst F."/>
            <person name="Kurapkat G."/>
            <person name="Madueno E."/>
            <person name="Maitournam A."/>
            <person name="Mata Vicente J."/>
            <person name="Ng E."/>
            <person name="Nedjari H."/>
            <person name="Nordsiek G."/>
            <person name="Novella S."/>
            <person name="de Pablos B."/>
            <person name="Perez-Diaz J.-C."/>
            <person name="Purcell R."/>
            <person name="Remmel B."/>
            <person name="Rose M."/>
            <person name="Schlueter T."/>
            <person name="Simoes N."/>
            <person name="Tierrez A."/>
            <person name="Vazquez-Boland J.-A."/>
            <person name="Voss H."/>
            <person name="Wehland J."/>
            <person name="Cossart P."/>
        </authorList>
    </citation>
    <scope>NUCLEOTIDE SEQUENCE [LARGE SCALE GENOMIC DNA]</scope>
    <source>
        <strain>ATCC BAA-679 / EGD-e</strain>
    </source>
</reference>
<protein>
    <recommendedName>
        <fullName evidence="1">ATP synthase subunit beta 1</fullName>
        <ecNumber evidence="1">7.1.2.2</ecNumber>
    </recommendedName>
    <alternativeName>
        <fullName evidence="1">ATP synthase F1 sector subunit beta 1</fullName>
    </alternativeName>
    <alternativeName>
        <fullName evidence="1">F-ATPase subunit beta 1</fullName>
    </alternativeName>
</protein>
<keyword id="KW-0066">ATP synthesis</keyword>
<keyword id="KW-0067">ATP-binding</keyword>
<keyword id="KW-1003">Cell membrane</keyword>
<keyword id="KW-0139">CF(1)</keyword>
<keyword id="KW-0375">Hydrogen ion transport</keyword>
<keyword id="KW-0406">Ion transport</keyword>
<keyword id="KW-0472">Membrane</keyword>
<keyword id="KW-0547">Nucleotide-binding</keyword>
<keyword id="KW-1185">Reference proteome</keyword>
<keyword id="KW-1278">Translocase</keyword>
<keyword id="KW-0813">Transport</keyword>
<evidence type="ECO:0000255" key="1">
    <source>
        <dbReference type="HAMAP-Rule" id="MF_01347"/>
    </source>
</evidence>
<proteinExistence type="inferred from homology"/>
<sequence length="456" mass="50127">MKKHTGTIISISGFVLRIEFNESELPEIGFALEYHTHQGTYLAEVVQHTGINTVSAIAIGEVSGLARGTEVVNLGHPIEVPVGETVQGRMLNVYGKAIDGKPEPAAEVKWPIFRAQPLLRELDTNKEILYTGIKVIDLICPILKGGKTGLFGGAGVGKSVLMQELINNISMLGGNSVFTGVGERVREGIGLYKELEASGVLPQTTVVLGQMNESPGVRMRVALTGLTIAEYLRDEEKKDVLLFIDNVFRFIQAGSEVSSLQGKIPITGGYQSTLSKEVGDFQDRIASTKNGSITSIQCVFLPADDIDDPSAVATFSHLDSTIVLERSIAALGIFPAVNPLQSFSRALNPTFVGERHYQLAVQVKFILQRYMELQEIINVLGMAELSDEDRKLVHRARKIRNFLSQPFYVSEKFTGTEGTFVEIEDLLGSIERILNGDYDERSERDFLFIGSYKDLK</sequence>
<comment type="function">
    <text evidence="1">Produces ATP from ADP in the presence of a proton gradient across the membrane. The catalytic sites are hosted primarily by the beta subunits.</text>
</comment>
<comment type="catalytic activity">
    <reaction evidence="1">
        <text>ATP + H2O + 4 H(+)(in) = ADP + phosphate + 5 H(+)(out)</text>
        <dbReference type="Rhea" id="RHEA:57720"/>
        <dbReference type="ChEBI" id="CHEBI:15377"/>
        <dbReference type="ChEBI" id="CHEBI:15378"/>
        <dbReference type="ChEBI" id="CHEBI:30616"/>
        <dbReference type="ChEBI" id="CHEBI:43474"/>
        <dbReference type="ChEBI" id="CHEBI:456216"/>
        <dbReference type="EC" id="7.1.2.2"/>
    </reaction>
</comment>
<comment type="subunit">
    <text evidence="1">F-type ATPases have 2 components, CF(1) - the catalytic core - and CF(0) - the membrane proton channel. CF(1) has five subunits: alpha(3), beta(3), gamma(1), delta(1), epsilon(1). CF(0) has three main subunits: a(1), b(2) and c(9-12). The alpha and beta chains form an alternating ring which encloses part of the gamma chain. CF(1) is attached to CF(0) by a central stalk formed by the gamma and epsilon chains, while a peripheral stalk is formed by the delta and b chains.</text>
</comment>
<comment type="subcellular location">
    <subcellularLocation>
        <location evidence="1">Cell membrane</location>
        <topology evidence="1">Peripheral membrane protein</topology>
    </subcellularLocation>
</comment>
<comment type="similarity">
    <text evidence="1">Belongs to the ATPase alpha/beta chains family.</text>
</comment>
<gene>
    <name evidence="1" type="primary">atpD1</name>
    <name type="ordered locus">lmo0092</name>
</gene>
<name>ATPB1_LISMO</name>
<feature type="chain" id="PRO_0000339538" description="ATP synthase subunit beta 1">
    <location>
        <begin position="1"/>
        <end position="456"/>
    </location>
</feature>
<feature type="binding site" evidence="1">
    <location>
        <begin position="152"/>
        <end position="159"/>
    </location>
    <ligand>
        <name>ATP</name>
        <dbReference type="ChEBI" id="CHEBI:30616"/>
    </ligand>
</feature>
<accession>Q8YAM6</accession>
<organism>
    <name type="scientific">Listeria monocytogenes serovar 1/2a (strain ATCC BAA-679 / EGD-e)</name>
    <dbReference type="NCBI Taxonomy" id="169963"/>
    <lineage>
        <taxon>Bacteria</taxon>
        <taxon>Bacillati</taxon>
        <taxon>Bacillota</taxon>
        <taxon>Bacilli</taxon>
        <taxon>Bacillales</taxon>
        <taxon>Listeriaceae</taxon>
        <taxon>Listeria</taxon>
    </lineage>
</organism>